<protein>
    <recommendedName>
        <fullName>Conotoxin PnMKLT1-0122</fullName>
    </recommendedName>
</protein>
<organism>
    <name type="scientific">Conus pennaceus</name>
    <name type="common">Feathered cone</name>
    <name type="synonym">Conus episcopus</name>
    <dbReference type="NCBI Taxonomy" id="37335"/>
    <lineage>
        <taxon>Eukaryota</taxon>
        <taxon>Metazoa</taxon>
        <taxon>Spiralia</taxon>
        <taxon>Lophotrochozoa</taxon>
        <taxon>Mollusca</taxon>
        <taxon>Gastropoda</taxon>
        <taxon>Caenogastropoda</taxon>
        <taxon>Neogastropoda</taxon>
        <taxon>Conoidea</taxon>
        <taxon>Conidae</taxon>
        <taxon>Conus</taxon>
        <taxon>Darioconus</taxon>
    </lineage>
</organism>
<proteinExistence type="evidence at transcript level"/>
<comment type="subcellular location">
    <subcellularLocation>
        <location evidence="1">Secreted</location>
    </subcellularLocation>
</comment>
<comment type="tissue specificity">
    <text>Expressed by the venom duct.</text>
</comment>
<comment type="domain">
    <text evidence="1">The presence of a 'disulfide through disulfide knot' structurally defines this protein as a knottin.</text>
</comment>
<comment type="domain">
    <text>The cysteine framework is VI/VII (C-C-CC-C-C).</text>
</comment>
<comment type="similarity">
    <text evidence="3">Belongs to the conotoxin O1 superfamily.</text>
</comment>
<sequence>MKLTCMMIVAVLFLTAWTFATAEDPRNGLENLFSKAHHEMKNPEDSKLNKRCVKYLDPCDMLRHTCCFGLCVLIACI</sequence>
<keyword id="KW-1015">Disulfide bond</keyword>
<keyword id="KW-0960">Knottin</keyword>
<keyword id="KW-0528">Neurotoxin</keyword>
<keyword id="KW-0964">Secreted</keyword>
<keyword id="KW-0732">Signal</keyword>
<keyword id="KW-0800">Toxin</keyword>
<name>O16K_CONPE</name>
<reference key="1">
    <citation type="journal article" date="2001" name="Mol. Biol. Evol.">
        <title>Mechanisms for evolving hypervariability: the case of conopeptides.</title>
        <authorList>
            <person name="Conticello S.G."/>
            <person name="Gilad Y."/>
            <person name="Avidan N."/>
            <person name="Ben-Asher E."/>
            <person name="Levy Z."/>
            <person name="Fainzilber M."/>
        </authorList>
    </citation>
    <scope>NUCLEOTIDE SEQUENCE [MRNA]</scope>
    <source>
        <tissue>Venom duct</tissue>
    </source>
</reference>
<accession>Q9U659</accession>
<dbReference type="EMBL" id="AF193257">
    <property type="protein sequence ID" value="AAF07968.1"/>
    <property type="molecule type" value="mRNA"/>
</dbReference>
<dbReference type="SMR" id="Q9U659"/>
<dbReference type="ConoServer" id="1090">
    <property type="toxin name" value="Pn6.1 precursor"/>
</dbReference>
<dbReference type="GO" id="GO:0005576">
    <property type="term" value="C:extracellular region"/>
    <property type="evidence" value="ECO:0007669"/>
    <property type="project" value="UniProtKB-SubCell"/>
</dbReference>
<dbReference type="GO" id="GO:0008200">
    <property type="term" value="F:ion channel inhibitor activity"/>
    <property type="evidence" value="ECO:0007669"/>
    <property type="project" value="InterPro"/>
</dbReference>
<dbReference type="GO" id="GO:0090729">
    <property type="term" value="F:toxin activity"/>
    <property type="evidence" value="ECO:0007669"/>
    <property type="project" value="UniProtKB-KW"/>
</dbReference>
<dbReference type="InterPro" id="IPR004214">
    <property type="entry name" value="Conotoxin"/>
</dbReference>
<dbReference type="Pfam" id="PF02950">
    <property type="entry name" value="Conotoxin"/>
    <property type="match status" value="1"/>
</dbReference>
<evidence type="ECO:0000250" key="1"/>
<evidence type="ECO:0000255" key="2"/>
<evidence type="ECO:0000305" key="3"/>
<feature type="signal peptide" evidence="2">
    <location>
        <begin position="1"/>
        <end position="22"/>
    </location>
</feature>
<feature type="propeptide" id="PRO_0000404712" evidence="1">
    <location>
        <begin position="23"/>
        <end position="49"/>
    </location>
</feature>
<feature type="peptide" id="PRO_0000404713" description="Conotoxin PnMKLT1-0122">
    <location>
        <begin position="52"/>
        <end position="77"/>
    </location>
</feature>
<feature type="disulfide bond" evidence="1">
    <location>
        <begin position="52"/>
        <end position="67"/>
    </location>
</feature>
<feature type="disulfide bond" evidence="1">
    <location>
        <begin position="59"/>
        <end position="71"/>
    </location>
</feature>
<feature type="disulfide bond" evidence="1">
    <location>
        <begin position="66"/>
        <end position="76"/>
    </location>
</feature>